<organism>
    <name type="scientific">Ajellomyces dermatitidis (strain ER-3 / ATCC MYA-2586)</name>
    <name type="common">Blastomyces dermatitidis</name>
    <dbReference type="NCBI Taxonomy" id="559297"/>
    <lineage>
        <taxon>Eukaryota</taxon>
        <taxon>Fungi</taxon>
        <taxon>Dikarya</taxon>
        <taxon>Ascomycota</taxon>
        <taxon>Pezizomycotina</taxon>
        <taxon>Eurotiomycetes</taxon>
        <taxon>Eurotiomycetidae</taxon>
        <taxon>Onygenales</taxon>
        <taxon>Ajellomycetaceae</taxon>
        <taxon>Blastomyces</taxon>
    </lineage>
</organism>
<protein>
    <recommendedName>
        <fullName evidence="1">ATPase GET3</fullName>
        <ecNumber evidence="1">3.6.-.-</ecNumber>
    </recommendedName>
    <alternativeName>
        <fullName evidence="1">Arsenical pump-driving ATPase</fullName>
    </alternativeName>
    <alternativeName>
        <fullName evidence="1">Arsenite-stimulated ATPase</fullName>
    </alternativeName>
    <alternativeName>
        <fullName evidence="1">Golgi to ER traffic protein 3</fullName>
    </alternativeName>
    <alternativeName>
        <fullName evidence="1">Guided entry of tail-anchored proteins 3</fullName>
    </alternativeName>
</protein>
<dbReference type="EC" id="3.6.-.-" evidence="1"/>
<dbReference type="EMBL" id="EQ999973">
    <property type="protein sequence ID" value="EEQ83950.1"/>
    <property type="molecule type" value="Genomic_DNA"/>
</dbReference>
<dbReference type="SMR" id="C5G9V3"/>
<dbReference type="STRING" id="559297.C5G9V3"/>
<dbReference type="VEuPathDB" id="FungiDB:BDCG_00755"/>
<dbReference type="eggNOG" id="KOG2825">
    <property type="taxonomic scope" value="Eukaryota"/>
</dbReference>
<dbReference type="HOGENOM" id="CLU_040761_0_0_1"/>
<dbReference type="OMA" id="MDAPYEF"/>
<dbReference type="GO" id="GO:0043529">
    <property type="term" value="C:GET complex"/>
    <property type="evidence" value="ECO:0007669"/>
    <property type="project" value="EnsemblFungi"/>
</dbReference>
<dbReference type="GO" id="GO:0005524">
    <property type="term" value="F:ATP binding"/>
    <property type="evidence" value="ECO:0007669"/>
    <property type="project" value="UniProtKB-UniRule"/>
</dbReference>
<dbReference type="GO" id="GO:0016887">
    <property type="term" value="F:ATP hydrolysis activity"/>
    <property type="evidence" value="ECO:0007669"/>
    <property type="project" value="EnsemblFungi"/>
</dbReference>
<dbReference type="GO" id="GO:0005085">
    <property type="term" value="F:guanyl-nucleotide exchange factor activity"/>
    <property type="evidence" value="ECO:0007669"/>
    <property type="project" value="EnsemblFungi"/>
</dbReference>
<dbReference type="GO" id="GO:0042802">
    <property type="term" value="F:identical protein binding"/>
    <property type="evidence" value="ECO:0007669"/>
    <property type="project" value="EnsemblFungi"/>
</dbReference>
<dbReference type="GO" id="GO:0046872">
    <property type="term" value="F:metal ion binding"/>
    <property type="evidence" value="ECO:0007669"/>
    <property type="project" value="UniProtKB-KW"/>
</dbReference>
<dbReference type="GO" id="GO:0044183">
    <property type="term" value="F:protein folding chaperone"/>
    <property type="evidence" value="ECO:0007669"/>
    <property type="project" value="EnsemblFungi"/>
</dbReference>
<dbReference type="GO" id="GO:0051082">
    <property type="term" value="F:unfolded protein binding"/>
    <property type="evidence" value="ECO:0007669"/>
    <property type="project" value="EnsemblFungi"/>
</dbReference>
<dbReference type="GO" id="GO:0034599">
    <property type="term" value="P:cellular response to oxidative stress"/>
    <property type="evidence" value="ECO:0007669"/>
    <property type="project" value="EnsemblFungi"/>
</dbReference>
<dbReference type="GO" id="GO:0000750">
    <property type="term" value="P:pheromone-dependent signal transduction involved in conjugation with cellular fusion"/>
    <property type="evidence" value="ECO:0007669"/>
    <property type="project" value="EnsemblFungi"/>
</dbReference>
<dbReference type="GO" id="GO:0006620">
    <property type="term" value="P:post-translational protein targeting to endoplasmic reticulum membrane"/>
    <property type="evidence" value="ECO:0007669"/>
    <property type="project" value="EnsemblFungi"/>
</dbReference>
<dbReference type="GO" id="GO:0009408">
    <property type="term" value="P:response to heat"/>
    <property type="evidence" value="ECO:0007669"/>
    <property type="project" value="EnsemblFungi"/>
</dbReference>
<dbReference type="GO" id="GO:0010038">
    <property type="term" value="P:response to metal ion"/>
    <property type="evidence" value="ECO:0007669"/>
    <property type="project" value="EnsemblFungi"/>
</dbReference>
<dbReference type="GO" id="GO:0006890">
    <property type="term" value="P:retrograde vesicle-mediated transport, Golgi to endoplasmic reticulum"/>
    <property type="evidence" value="ECO:0007669"/>
    <property type="project" value="EnsemblFungi"/>
</dbReference>
<dbReference type="GO" id="GO:0071816">
    <property type="term" value="P:tail-anchored membrane protein insertion into ER membrane"/>
    <property type="evidence" value="ECO:0007669"/>
    <property type="project" value="EnsemblFungi"/>
</dbReference>
<dbReference type="CDD" id="cd02035">
    <property type="entry name" value="ArsA"/>
    <property type="match status" value="1"/>
</dbReference>
<dbReference type="FunFam" id="3.40.50.300:FF:000235">
    <property type="entry name" value="ATPase ASNA1"/>
    <property type="match status" value="1"/>
</dbReference>
<dbReference type="Gene3D" id="3.40.50.300">
    <property type="entry name" value="P-loop containing nucleotide triphosphate hydrolases"/>
    <property type="match status" value="1"/>
</dbReference>
<dbReference type="HAMAP" id="MF_03112">
    <property type="entry name" value="Asna1_Get3"/>
    <property type="match status" value="1"/>
</dbReference>
<dbReference type="InterPro" id="IPR025723">
    <property type="entry name" value="Anion-transp_ATPase-like_dom"/>
</dbReference>
<dbReference type="InterPro" id="IPR016300">
    <property type="entry name" value="ATPase_ArsA/GET3"/>
</dbReference>
<dbReference type="InterPro" id="IPR027542">
    <property type="entry name" value="ATPase_ArsA/GET3_euk"/>
</dbReference>
<dbReference type="InterPro" id="IPR027417">
    <property type="entry name" value="P-loop_NTPase"/>
</dbReference>
<dbReference type="NCBIfam" id="TIGR00345">
    <property type="entry name" value="GET3_arsA_TRC40"/>
    <property type="match status" value="1"/>
</dbReference>
<dbReference type="PANTHER" id="PTHR10803">
    <property type="entry name" value="ARSENICAL PUMP-DRIVING ATPASE ARSENITE-TRANSLOCATING ATPASE"/>
    <property type="match status" value="1"/>
</dbReference>
<dbReference type="PANTHER" id="PTHR10803:SF3">
    <property type="entry name" value="ATPASE GET3"/>
    <property type="match status" value="1"/>
</dbReference>
<dbReference type="Pfam" id="PF02374">
    <property type="entry name" value="ArsA_ATPase"/>
    <property type="match status" value="1"/>
</dbReference>
<dbReference type="SUPFAM" id="SSF52540">
    <property type="entry name" value="P-loop containing nucleoside triphosphate hydrolases"/>
    <property type="match status" value="1"/>
</dbReference>
<proteinExistence type="inferred from homology"/>
<reference key="1">
    <citation type="journal article" date="2015" name="PLoS Genet.">
        <title>The dynamic genome and transcriptome of the human fungal pathogen Blastomyces and close relative Emmonsia.</title>
        <authorList>
            <person name="Munoz J.F."/>
            <person name="Gauthier G.M."/>
            <person name="Desjardins C.A."/>
            <person name="Gallo J.E."/>
            <person name="Holder J."/>
            <person name="Sullivan T.D."/>
            <person name="Marty A.J."/>
            <person name="Carmen J.C."/>
            <person name="Chen Z."/>
            <person name="Ding L."/>
            <person name="Gujja S."/>
            <person name="Magrini V."/>
            <person name="Misas E."/>
            <person name="Mitreva M."/>
            <person name="Priest M."/>
            <person name="Saif S."/>
            <person name="Whiston E.A."/>
            <person name="Young S."/>
            <person name="Zeng Q."/>
            <person name="Goldman W.E."/>
            <person name="Mardis E.R."/>
            <person name="Taylor J.W."/>
            <person name="McEwen J.G."/>
            <person name="Clay O.K."/>
            <person name="Klein B.S."/>
            <person name="Cuomo C.A."/>
        </authorList>
    </citation>
    <scope>NUCLEOTIDE SEQUENCE [LARGE SCALE GENOMIC DNA]</scope>
    <source>
        <strain>ER-3 / ATCC MYA-2586</strain>
    </source>
</reference>
<gene>
    <name evidence="1" type="primary">GET3</name>
    <name type="ORF">BDCG_00755</name>
</gene>
<keyword id="KW-0067">ATP-binding</keyword>
<keyword id="KW-0963">Cytoplasm</keyword>
<keyword id="KW-0256">Endoplasmic reticulum</keyword>
<keyword id="KW-0378">Hydrolase</keyword>
<keyword id="KW-0479">Metal-binding</keyword>
<keyword id="KW-0547">Nucleotide-binding</keyword>
<keyword id="KW-0813">Transport</keyword>
<keyword id="KW-0862">Zinc</keyword>
<name>GET3_AJEDR</name>
<comment type="function">
    <text evidence="1">ATPase required for the post-translational delivery of tail-anchored (TA) proteins to the endoplasmic reticulum. Recognizes and selectively binds the transmembrane domain of TA proteins in the cytosol. This complex then targets to the endoplasmic reticulum by membrane-bound receptors, where the tail-anchored protein is released for insertion. This process is regulated by ATP binding and hydrolysis. ATP binding drives the homodimer towards the closed dimer state, facilitating recognition of newly synthesized TA membrane proteins. ATP hydrolysis is required for insertion. Subsequently, the homodimer reverts towards the open dimer state, lowering its affinity for the membrane-bound receptor, and returning it to the cytosol to initiate a new round of targeting.</text>
</comment>
<comment type="subunit">
    <text evidence="1">Homodimer.</text>
</comment>
<comment type="subcellular location">
    <subcellularLocation>
        <location evidence="1">Cytoplasm</location>
    </subcellularLocation>
    <subcellularLocation>
        <location evidence="1">Endoplasmic reticulum</location>
    </subcellularLocation>
</comment>
<comment type="similarity">
    <text evidence="1">Belongs to the arsA ATPase family.</text>
</comment>
<sequence length="341" mass="37436">MSSTAIVSGDESLEPTLQNLLDQKTLRWVFVGGKGGVGKTTTSCSLAIQLAKVRKSVLLISTDPAHNLSDAFGQKFGKEARLIDGFDNLSAMEIDPNGSIQDLLAAGGDQADDPMGGLGLGGMMQDLAFSIPGVDEAMSFAEVLKQVKSLSYEVIIFDTAPTGHTLRFLQFPTVLEKALGKLSQLSSQFGPMLNSVLGARGGLPGGQNLDEILSKMESLRETIGEVNAQFKDADLTTFVCVCIAEFLSLYETERMIQELTSYQIDTHCIVVNQLLFPGKDSSCEQCKARRKMQKKYLNEIEELYEDFNVVRMPMLVEEVRGKEKLEKFSNMLINPYIPPQE</sequence>
<accession>C5G9V3</accession>
<evidence type="ECO:0000255" key="1">
    <source>
        <dbReference type="HAMAP-Rule" id="MF_03112"/>
    </source>
</evidence>
<feature type="chain" id="PRO_0000388184" description="ATPase GET3">
    <location>
        <begin position="1"/>
        <end position="341"/>
    </location>
</feature>
<feature type="active site" evidence="1">
    <location>
        <position position="63"/>
    </location>
</feature>
<feature type="binding site" evidence="1">
    <location>
        <begin position="34"/>
        <end position="41"/>
    </location>
    <ligand>
        <name>ATP</name>
        <dbReference type="ChEBI" id="CHEBI:30616"/>
    </ligand>
</feature>
<feature type="binding site" evidence="1">
    <location>
        <position position="245"/>
    </location>
    <ligand>
        <name>ATP</name>
        <dbReference type="ChEBI" id="CHEBI:30616"/>
    </ligand>
</feature>
<feature type="binding site" evidence="1">
    <location>
        <position position="272"/>
    </location>
    <ligand>
        <name>ATP</name>
        <dbReference type="ChEBI" id="CHEBI:30616"/>
    </ligand>
</feature>
<feature type="binding site" evidence="1">
    <location>
        <position position="283"/>
    </location>
    <ligand>
        <name>Zn(2+)</name>
        <dbReference type="ChEBI" id="CHEBI:29105"/>
        <note>ligand shared between dimeric partners</note>
    </ligand>
</feature>
<feature type="binding site" evidence="1">
    <location>
        <position position="286"/>
    </location>
    <ligand>
        <name>Zn(2+)</name>
        <dbReference type="ChEBI" id="CHEBI:29105"/>
        <note>ligand shared between dimeric partners</note>
    </ligand>
</feature>